<keyword id="KW-0312">Gluconeogenesis</keyword>
<keyword id="KW-0324">Glycolysis</keyword>
<keyword id="KW-0413">Isomerase</keyword>
<protein>
    <recommendedName>
        <fullName evidence="1">2,3-bisphosphoglycerate-dependent phosphoglycerate mutase</fullName>
        <shortName evidence="1">BPG-dependent PGAM</shortName>
        <shortName evidence="1">PGAM</shortName>
        <shortName evidence="1">Phosphoglyceromutase</shortName>
        <shortName evidence="1">dPGM</shortName>
        <ecNumber evidence="1">5.4.2.11</ecNumber>
    </recommendedName>
</protein>
<comment type="function">
    <text evidence="1">Catalyzes the interconversion of 2-phosphoglycerate and 3-phosphoglycerate.</text>
</comment>
<comment type="catalytic activity">
    <reaction evidence="1">
        <text>(2R)-2-phosphoglycerate = (2R)-3-phosphoglycerate</text>
        <dbReference type="Rhea" id="RHEA:15901"/>
        <dbReference type="ChEBI" id="CHEBI:58272"/>
        <dbReference type="ChEBI" id="CHEBI:58289"/>
        <dbReference type="EC" id="5.4.2.11"/>
    </reaction>
</comment>
<comment type="pathway">
    <text evidence="1">Carbohydrate degradation; glycolysis; pyruvate from D-glyceraldehyde 3-phosphate: step 3/5.</text>
</comment>
<comment type="similarity">
    <text evidence="1">Belongs to the phosphoglycerate mutase family. BPG-dependent PGAM subfamily.</text>
</comment>
<reference key="1">
    <citation type="journal article" date="2009" name="Appl. Environ. Microbiol.">
        <title>Three genomes from the phylum Acidobacteria provide insight into the lifestyles of these microorganisms in soils.</title>
        <authorList>
            <person name="Ward N.L."/>
            <person name="Challacombe J.F."/>
            <person name="Janssen P.H."/>
            <person name="Henrissat B."/>
            <person name="Coutinho P.M."/>
            <person name="Wu M."/>
            <person name="Xie G."/>
            <person name="Haft D.H."/>
            <person name="Sait M."/>
            <person name="Badger J."/>
            <person name="Barabote R.D."/>
            <person name="Bradley B."/>
            <person name="Brettin T.S."/>
            <person name="Brinkac L.M."/>
            <person name="Bruce D."/>
            <person name="Creasy T."/>
            <person name="Daugherty S.C."/>
            <person name="Davidsen T.M."/>
            <person name="DeBoy R.T."/>
            <person name="Detter J.C."/>
            <person name="Dodson R.J."/>
            <person name="Durkin A.S."/>
            <person name="Ganapathy A."/>
            <person name="Gwinn-Giglio M."/>
            <person name="Han C.S."/>
            <person name="Khouri H."/>
            <person name="Kiss H."/>
            <person name="Kothari S.P."/>
            <person name="Madupu R."/>
            <person name="Nelson K.E."/>
            <person name="Nelson W.C."/>
            <person name="Paulsen I."/>
            <person name="Penn K."/>
            <person name="Ren Q."/>
            <person name="Rosovitz M.J."/>
            <person name="Selengut J.D."/>
            <person name="Shrivastava S."/>
            <person name="Sullivan S.A."/>
            <person name="Tapia R."/>
            <person name="Thompson L.S."/>
            <person name="Watkins K.L."/>
            <person name="Yang Q."/>
            <person name="Yu C."/>
            <person name="Zafar N."/>
            <person name="Zhou L."/>
            <person name="Kuske C.R."/>
        </authorList>
    </citation>
    <scope>NUCLEOTIDE SEQUENCE [LARGE SCALE GENOMIC DNA]</scope>
    <source>
        <strain>Ellin6076</strain>
    </source>
</reference>
<proteinExistence type="inferred from homology"/>
<sequence>MKKLVLIRHGESTWNKENRFTGWTDVDLSDEGRQQATEAAEVLKREGYVFDVAYTSVLKRAIRTLWTVLDGMDLMWIPVHRSWRLNERHYGALQGLNKAETAAKFGEDQVKIWRRSYDIPPPVLTADDPRFPGHDPRYQSLTKEELPLTECLKDTVARFLPLWHDTIAPAIRSGQRVIIAAHGNSLRALVKYLDGVSEADIVELNIPTGMPLVYELDDDLKPLNRYYLGDPEKVKAAMEAVAAQGKKK</sequence>
<name>GPMA_SOLUE</name>
<gene>
    <name evidence="1" type="primary">gpmA</name>
    <name type="ordered locus">Acid_4374</name>
</gene>
<evidence type="ECO:0000255" key="1">
    <source>
        <dbReference type="HAMAP-Rule" id="MF_01039"/>
    </source>
</evidence>
<accession>Q01YD0</accession>
<feature type="chain" id="PRO_1000064098" description="2,3-bisphosphoglycerate-dependent phosphoglycerate mutase">
    <location>
        <begin position="1"/>
        <end position="248"/>
    </location>
</feature>
<feature type="active site" description="Tele-phosphohistidine intermediate" evidence="1">
    <location>
        <position position="9"/>
    </location>
</feature>
<feature type="active site" description="Proton donor/acceptor" evidence="1">
    <location>
        <position position="87"/>
    </location>
</feature>
<feature type="binding site" evidence="1">
    <location>
        <begin position="8"/>
        <end position="15"/>
    </location>
    <ligand>
        <name>substrate</name>
    </ligand>
</feature>
<feature type="binding site" evidence="1">
    <location>
        <begin position="21"/>
        <end position="22"/>
    </location>
    <ligand>
        <name>substrate</name>
    </ligand>
</feature>
<feature type="binding site" evidence="1">
    <location>
        <position position="60"/>
    </location>
    <ligand>
        <name>substrate</name>
    </ligand>
</feature>
<feature type="binding site" evidence="1">
    <location>
        <begin position="87"/>
        <end position="90"/>
    </location>
    <ligand>
        <name>substrate</name>
    </ligand>
</feature>
<feature type="binding site" evidence="1">
    <location>
        <position position="98"/>
    </location>
    <ligand>
        <name>substrate</name>
    </ligand>
</feature>
<feature type="binding site" evidence="1">
    <location>
        <begin position="114"/>
        <end position="115"/>
    </location>
    <ligand>
        <name>substrate</name>
    </ligand>
</feature>
<feature type="binding site" evidence="1">
    <location>
        <begin position="183"/>
        <end position="184"/>
    </location>
    <ligand>
        <name>substrate</name>
    </ligand>
</feature>
<feature type="site" description="Transition state stabilizer" evidence="1">
    <location>
        <position position="182"/>
    </location>
</feature>
<organism>
    <name type="scientific">Solibacter usitatus (strain Ellin6076)</name>
    <dbReference type="NCBI Taxonomy" id="234267"/>
    <lineage>
        <taxon>Bacteria</taxon>
        <taxon>Pseudomonadati</taxon>
        <taxon>Acidobacteriota</taxon>
        <taxon>Terriglobia</taxon>
        <taxon>Bryobacterales</taxon>
        <taxon>Solibacteraceae</taxon>
        <taxon>Candidatus Solibacter</taxon>
    </lineage>
</organism>
<dbReference type="EC" id="5.4.2.11" evidence="1"/>
<dbReference type="EMBL" id="CP000473">
    <property type="protein sequence ID" value="ABJ85335.1"/>
    <property type="molecule type" value="Genomic_DNA"/>
</dbReference>
<dbReference type="SMR" id="Q01YD0"/>
<dbReference type="FunCoup" id="Q01YD0">
    <property type="interactions" value="506"/>
</dbReference>
<dbReference type="STRING" id="234267.Acid_4374"/>
<dbReference type="KEGG" id="sus:Acid_4374"/>
<dbReference type="eggNOG" id="COG0588">
    <property type="taxonomic scope" value="Bacteria"/>
</dbReference>
<dbReference type="HOGENOM" id="CLU_033323_1_1_0"/>
<dbReference type="InParanoid" id="Q01YD0"/>
<dbReference type="OrthoDB" id="9781415at2"/>
<dbReference type="UniPathway" id="UPA00109">
    <property type="reaction ID" value="UER00186"/>
</dbReference>
<dbReference type="GO" id="GO:0004619">
    <property type="term" value="F:phosphoglycerate mutase activity"/>
    <property type="evidence" value="ECO:0007669"/>
    <property type="project" value="UniProtKB-EC"/>
</dbReference>
<dbReference type="GO" id="GO:0006094">
    <property type="term" value="P:gluconeogenesis"/>
    <property type="evidence" value="ECO:0007669"/>
    <property type="project" value="UniProtKB-UniRule"/>
</dbReference>
<dbReference type="GO" id="GO:0006096">
    <property type="term" value="P:glycolytic process"/>
    <property type="evidence" value="ECO:0007669"/>
    <property type="project" value="UniProtKB-UniRule"/>
</dbReference>
<dbReference type="CDD" id="cd07067">
    <property type="entry name" value="HP_PGM_like"/>
    <property type="match status" value="1"/>
</dbReference>
<dbReference type="FunFam" id="3.40.50.1240:FF:000003">
    <property type="entry name" value="2,3-bisphosphoglycerate-dependent phosphoglycerate mutase"/>
    <property type="match status" value="1"/>
</dbReference>
<dbReference type="Gene3D" id="3.40.50.1240">
    <property type="entry name" value="Phosphoglycerate mutase-like"/>
    <property type="match status" value="1"/>
</dbReference>
<dbReference type="HAMAP" id="MF_01039">
    <property type="entry name" value="PGAM_GpmA"/>
    <property type="match status" value="1"/>
</dbReference>
<dbReference type="InterPro" id="IPR013078">
    <property type="entry name" value="His_Pase_superF_clade-1"/>
</dbReference>
<dbReference type="InterPro" id="IPR029033">
    <property type="entry name" value="His_PPase_superfam"/>
</dbReference>
<dbReference type="InterPro" id="IPR001345">
    <property type="entry name" value="PG/BPGM_mutase_AS"/>
</dbReference>
<dbReference type="InterPro" id="IPR005952">
    <property type="entry name" value="Phosphogly_mut1"/>
</dbReference>
<dbReference type="NCBIfam" id="TIGR01258">
    <property type="entry name" value="pgm_1"/>
    <property type="match status" value="1"/>
</dbReference>
<dbReference type="NCBIfam" id="NF010713">
    <property type="entry name" value="PRK14115.1"/>
    <property type="match status" value="1"/>
</dbReference>
<dbReference type="PANTHER" id="PTHR11931">
    <property type="entry name" value="PHOSPHOGLYCERATE MUTASE"/>
    <property type="match status" value="1"/>
</dbReference>
<dbReference type="Pfam" id="PF00300">
    <property type="entry name" value="His_Phos_1"/>
    <property type="match status" value="1"/>
</dbReference>
<dbReference type="PIRSF" id="PIRSF000709">
    <property type="entry name" value="6PFK_2-Ptase"/>
    <property type="match status" value="1"/>
</dbReference>
<dbReference type="SMART" id="SM00855">
    <property type="entry name" value="PGAM"/>
    <property type="match status" value="1"/>
</dbReference>
<dbReference type="SUPFAM" id="SSF53254">
    <property type="entry name" value="Phosphoglycerate mutase-like"/>
    <property type="match status" value="1"/>
</dbReference>
<dbReference type="PROSITE" id="PS00175">
    <property type="entry name" value="PG_MUTASE"/>
    <property type="match status" value="1"/>
</dbReference>